<proteinExistence type="inferred from homology"/>
<dbReference type="EMBL" id="CP000024">
    <property type="protein sequence ID" value="AAV63510.1"/>
    <property type="status" value="ALT_INIT"/>
    <property type="molecule type" value="Genomic_DNA"/>
</dbReference>
<dbReference type="RefSeq" id="WP_011226695.1">
    <property type="nucleotide sequence ID" value="NC_006449.1"/>
</dbReference>
<dbReference type="SMR" id="Q5LXK2"/>
<dbReference type="GeneID" id="66899726"/>
<dbReference type="KEGG" id="stc:str2000"/>
<dbReference type="HOGENOM" id="CLU_078938_3_2_9"/>
<dbReference type="GO" id="GO:1990904">
    <property type="term" value="C:ribonucleoprotein complex"/>
    <property type="evidence" value="ECO:0007669"/>
    <property type="project" value="UniProtKB-KW"/>
</dbReference>
<dbReference type="GO" id="GO:0005840">
    <property type="term" value="C:ribosome"/>
    <property type="evidence" value="ECO:0007669"/>
    <property type="project" value="UniProtKB-KW"/>
</dbReference>
<dbReference type="GO" id="GO:0019843">
    <property type="term" value="F:rRNA binding"/>
    <property type="evidence" value="ECO:0007669"/>
    <property type="project" value="UniProtKB-UniRule"/>
</dbReference>
<dbReference type="GO" id="GO:0003735">
    <property type="term" value="F:structural constituent of ribosome"/>
    <property type="evidence" value="ECO:0007669"/>
    <property type="project" value="InterPro"/>
</dbReference>
<dbReference type="GO" id="GO:0006412">
    <property type="term" value="P:translation"/>
    <property type="evidence" value="ECO:0007669"/>
    <property type="project" value="UniProtKB-UniRule"/>
</dbReference>
<dbReference type="FunFam" id="3.40.5.10:FF:000002">
    <property type="entry name" value="50S ribosomal protein L9"/>
    <property type="match status" value="1"/>
</dbReference>
<dbReference type="Gene3D" id="3.10.430.100">
    <property type="entry name" value="Ribosomal protein L9, C-terminal domain"/>
    <property type="match status" value="1"/>
</dbReference>
<dbReference type="Gene3D" id="3.40.5.10">
    <property type="entry name" value="Ribosomal protein L9, N-terminal domain"/>
    <property type="match status" value="1"/>
</dbReference>
<dbReference type="HAMAP" id="MF_00503">
    <property type="entry name" value="Ribosomal_bL9"/>
    <property type="match status" value="1"/>
</dbReference>
<dbReference type="InterPro" id="IPR000244">
    <property type="entry name" value="Ribosomal_bL9"/>
</dbReference>
<dbReference type="InterPro" id="IPR009027">
    <property type="entry name" value="Ribosomal_bL9/RNase_H1_N"/>
</dbReference>
<dbReference type="InterPro" id="IPR020594">
    <property type="entry name" value="Ribosomal_bL9_bac/chp"/>
</dbReference>
<dbReference type="InterPro" id="IPR020069">
    <property type="entry name" value="Ribosomal_bL9_C"/>
</dbReference>
<dbReference type="InterPro" id="IPR036791">
    <property type="entry name" value="Ribosomal_bL9_C_sf"/>
</dbReference>
<dbReference type="InterPro" id="IPR020070">
    <property type="entry name" value="Ribosomal_bL9_N"/>
</dbReference>
<dbReference type="InterPro" id="IPR036935">
    <property type="entry name" value="Ribosomal_bL9_N_sf"/>
</dbReference>
<dbReference type="NCBIfam" id="TIGR00158">
    <property type="entry name" value="L9"/>
    <property type="match status" value="1"/>
</dbReference>
<dbReference type="PANTHER" id="PTHR21368">
    <property type="entry name" value="50S RIBOSOMAL PROTEIN L9"/>
    <property type="match status" value="1"/>
</dbReference>
<dbReference type="Pfam" id="PF03948">
    <property type="entry name" value="Ribosomal_L9_C"/>
    <property type="match status" value="1"/>
</dbReference>
<dbReference type="Pfam" id="PF01281">
    <property type="entry name" value="Ribosomal_L9_N"/>
    <property type="match status" value="1"/>
</dbReference>
<dbReference type="SUPFAM" id="SSF55658">
    <property type="entry name" value="L9 N-domain-like"/>
    <property type="match status" value="1"/>
</dbReference>
<dbReference type="SUPFAM" id="SSF55653">
    <property type="entry name" value="Ribosomal protein L9 C-domain"/>
    <property type="match status" value="1"/>
</dbReference>
<dbReference type="PROSITE" id="PS00651">
    <property type="entry name" value="RIBOSOMAL_L9"/>
    <property type="match status" value="1"/>
</dbReference>
<keyword id="KW-0687">Ribonucleoprotein</keyword>
<keyword id="KW-0689">Ribosomal protein</keyword>
<keyword id="KW-0694">RNA-binding</keyword>
<keyword id="KW-0699">rRNA-binding</keyword>
<reference key="1">
    <citation type="journal article" date="2004" name="Nat. Biotechnol.">
        <title>Complete sequence and comparative genome analysis of the dairy bacterium Streptococcus thermophilus.</title>
        <authorList>
            <person name="Bolotin A."/>
            <person name="Quinquis B."/>
            <person name="Renault P."/>
            <person name="Sorokin A."/>
            <person name="Ehrlich S.D."/>
            <person name="Kulakauskas S."/>
            <person name="Lapidus A."/>
            <person name="Goltsman E."/>
            <person name="Mazur M."/>
            <person name="Pusch G.D."/>
            <person name="Fonstein M."/>
            <person name="Overbeek R."/>
            <person name="Kyprides N."/>
            <person name="Purnelle B."/>
            <person name="Prozzi D."/>
            <person name="Ngui K."/>
            <person name="Masuy D."/>
            <person name="Hancy F."/>
            <person name="Burteau S."/>
            <person name="Boutry M."/>
            <person name="Delcour J."/>
            <person name="Goffeau A."/>
            <person name="Hols P."/>
        </authorList>
    </citation>
    <scope>NUCLEOTIDE SEQUENCE [LARGE SCALE GENOMIC DNA]</scope>
    <source>
        <strain>CNRZ 1066</strain>
    </source>
</reference>
<accession>Q5LXK2</accession>
<organism>
    <name type="scientific">Streptococcus thermophilus (strain CNRZ 1066)</name>
    <dbReference type="NCBI Taxonomy" id="299768"/>
    <lineage>
        <taxon>Bacteria</taxon>
        <taxon>Bacillati</taxon>
        <taxon>Bacillota</taxon>
        <taxon>Bacilli</taxon>
        <taxon>Lactobacillales</taxon>
        <taxon>Streptococcaceae</taxon>
        <taxon>Streptococcus</taxon>
    </lineage>
</organism>
<feature type="chain" id="PRO_0000236598" description="Large ribosomal subunit protein bL9">
    <location>
        <begin position="1"/>
        <end position="152"/>
    </location>
</feature>
<comment type="function">
    <text evidence="1">Binds to the 23S rRNA.</text>
</comment>
<comment type="similarity">
    <text evidence="1">Belongs to the bacterial ribosomal protein bL9 family.</text>
</comment>
<comment type="sequence caution" evidence="2">
    <conflict type="erroneous initiation">
        <sequence resource="EMBL-CDS" id="AAV63510"/>
    </conflict>
</comment>
<gene>
    <name evidence="1" type="primary">rplI</name>
    <name type="ordered locus">str2000</name>
</gene>
<sequence length="152" mass="17171">MKVIFLQDVKGKGKKGEIKEVPLGYAQNFLIKKNLAKEATKQAIGELKGKQKSEEKHAAELLAEAKRVKEQLEKEENRLQFTEKVGPDGRTFGSITAKKIAEELQKQFGIKIDKRHIELEHPIRAIGLIEVPVKLHKEVNAQIKLNIKNSAE</sequence>
<name>RL9_STRT1</name>
<protein>
    <recommendedName>
        <fullName evidence="1">Large ribosomal subunit protein bL9</fullName>
    </recommendedName>
    <alternativeName>
        <fullName evidence="2">50S ribosomal protein L9</fullName>
    </alternativeName>
</protein>
<evidence type="ECO:0000255" key="1">
    <source>
        <dbReference type="HAMAP-Rule" id="MF_00503"/>
    </source>
</evidence>
<evidence type="ECO:0000305" key="2"/>